<name>HS189_ORYSJ</name>
<evidence type="ECO:0000255" key="1">
    <source>
        <dbReference type="PROSITE-ProRule" id="PRU00285"/>
    </source>
</evidence>
<evidence type="ECO:0000256" key="2">
    <source>
        <dbReference type="SAM" id="MobiDB-lite"/>
    </source>
</evidence>
<evidence type="ECO:0000305" key="3"/>
<comment type="subunit">
    <text>May form oligomeric structures.</text>
</comment>
<comment type="subcellular location">
    <subcellularLocation>
        <location evidence="3">Cytoplasm</location>
    </subcellularLocation>
</comment>
<comment type="similarity">
    <text evidence="1">Belongs to the small heat shock protein (HSP20) family.</text>
</comment>
<comment type="sequence caution" evidence="3">
    <conflict type="erroneous initiation">
        <sequence resource="EMBL-CDS" id="BAD07974"/>
    </conflict>
</comment>
<comment type="sequence caution" evidence="3">
    <conflict type="erroneous initiation">
        <sequence resource="EMBL-CDS" id="BAD08031"/>
    </conflict>
</comment>
<sequence>MSMITSMLGRKQNAQQKGGGGGGRTGGGGGGEIEPVSVDIMEPFMDAISLTAFAAAPSAAAAAAGVPSTASMDWKETAAAHVFMADMPGVRREEVRVEVEEEKVLRISGQRARAAEEKGERWHRVERSSERFVRTVRLPPNANTDGVHAALDNGVLTITIPKDNDRKPHARIIPITN</sequence>
<dbReference type="EMBL" id="AP004886">
    <property type="protein sequence ID" value="BAD07974.1"/>
    <property type="status" value="ALT_INIT"/>
    <property type="molecule type" value="Genomic_DNA"/>
</dbReference>
<dbReference type="EMBL" id="AP005311">
    <property type="protein sequence ID" value="BAD08031.1"/>
    <property type="status" value="ALT_INIT"/>
    <property type="molecule type" value="Genomic_DNA"/>
</dbReference>
<dbReference type="EMBL" id="AP008208">
    <property type="protein sequence ID" value="BAF07680.1"/>
    <property type="molecule type" value="Genomic_DNA"/>
</dbReference>
<dbReference type="EMBL" id="AP014958">
    <property type="protein sequence ID" value="BAS76785.1"/>
    <property type="molecule type" value="Genomic_DNA"/>
</dbReference>
<dbReference type="EMBL" id="CM000139">
    <property type="protein sequence ID" value="EAZ21596.1"/>
    <property type="molecule type" value="Genomic_DNA"/>
</dbReference>
<dbReference type="RefSeq" id="XP_015624153.1">
    <property type="nucleotide sequence ID" value="XM_015768667.1"/>
</dbReference>
<dbReference type="SMR" id="Q0E4A8"/>
<dbReference type="FunCoup" id="Q0E4A8">
    <property type="interactions" value="443"/>
</dbReference>
<dbReference type="STRING" id="39947.Q0E4A8"/>
<dbReference type="PaxDb" id="39947-Q0E4A8"/>
<dbReference type="EnsemblPlants" id="Os02t0128000-00">
    <property type="protein sequence ID" value="Os02t0128000-00"/>
    <property type="gene ID" value="Os02g0128000"/>
</dbReference>
<dbReference type="Gramene" id="Os02t0128000-00">
    <property type="protein sequence ID" value="Os02t0128000-00"/>
    <property type="gene ID" value="Os02g0128000"/>
</dbReference>
<dbReference type="KEGG" id="dosa:Os02g0128000"/>
<dbReference type="eggNOG" id="KOG0710">
    <property type="taxonomic scope" value="Eukaryota"/>
</dbReference>
<dbReference type="HOGENOM" id="CLU_046737_5_0_1"/>
<dbReference type="InParanoid" id="Q0E4A8"/>
<dbReference type="OMA" id="PAAHVFM"/>
<dbReference type="OrthoDB" id="1245404at2759"/>
<dbReference type="Proteomes" id="UP000000763">
    <property type="component" value="Chromosome 2"/>
</dbReference>
<dbReference type="Proteomes" id="UP000007752">
    <property type="component" value="Chromosome 2"/>
</dbReference>
<dbReference type="Proteomes" id="UP000059680">
    <property type="component" value="Chromosome 2"/>
</dbReference>
<dbReference type="GO" id="GO:0005737">
    <property type="term" value="C:cytoplasm"/>
    <property type="evidence" value="ECO:0007669"/>
    <property type="project" value="UniProtKB-SubCell"/>
</dbReference>
<dbReference type="GO" id="GO:0051082">
    <property type="term" value="F:unfolded protein binding"/>
    <property type="evidence" value="ECO:0000318"/>
    <property type="project" value="GO_Central"/>
</dbReference>
<dbReference type="GO" id="GO:0051259">
    <property type="term" value="P:protein complex oligomerization"/>
    <property type="evidence" value="ECO:0000318"/>
    <property type="project" value="GO_Central"/>
</dbReference>
<dbReference type="GO" id="GO:0006457">
    <property type="term" value="P:protein folding"/>
    <property type="evidence" value="ECO:0000318"/>
    <property type="project" value="GO_Central"/>
</dbReference>
<dbReference type="GO" id="GO:0009408">
    <property type="term" value="P:response to heat"/>
    <property type="evidence" value="ECO:0000318"/>
    <property type="project" value="GO_Central"/>
</dbReference>
<dbReference type="GO" id="GO:0042542">
    <property type="term" value="P:response to hydrogen peroxide"/>
    <property type="evidence" value="ECO:0000318"/>
    <property type="project" value="GO_Central"/>
</dbReference>
<dbReference type="GO" id="GO:0009651">
    <property type="term" value="P:response to salt stress"/>
    <property type="evidence" value="ECO:0000318"/>
    <property type="project" value="GO_Central"/>
</dbReference>
<dbReference type="CDD" id="cd06472">
    <property type="entry name" value="ACD_ScHsp26_like"/>
    <property type="match status" value="1"/>
</dbReference>
<dbReference type="FunFam" id="2.60.40.790:FF:000087">
    <property type="entry name" value="22.0 kDa heat shock protein"/>
    <property type="match status" value="1"/>
</dbReference>
<dbReference type="Gene3D" id="2.60.40.790">
    <property type="match status" value="1"/>
</dbReference>
<dbReference type="InterPro" id="IPR002068">
    <property type="entry name" value="A-crystallin/Hsp20_dom"/>
</dbReference>
<dbReference type="InterPro" id="IPR008978">
    <property type="entry name" value="HSP20-like_chaperone"/>
</dbReference>
<dbReference type="InterPro" id="IPR031107">
    <property type="entry name" value="Small_HSP"/>
</dbReference>
<dbReference type="PANTHER" id="PTHR11527">
    <property type="entry name" value="HEAT-SHOCK PROTEIN 20 FAMILY MEMBER"/>
    <property type="match status" value="1"/>
</dbReference>
<dbReference type="Pfam" id="PF00011">
    <property type="entry name" value="HSP20"/>
    <property type="match status" value="1"/>
</dbReference>
<dbReference type="SUPFAM" id="SSF49764">
    <property type="entry name" value="HSP20-like chaperones"/>
    <property type="match status" value="1"/>
</dbReference>
<dbReference type="PROSITE" id="PS01031">
    <property type="entry name" value="SHSP"/>
    <property type="match status" value="1"/>
</dbReference>
<accession>Q0E4A8</accession>
<accession>A0A0N7KEL9</accession>
<accession>Q6Z2L3</accession>
<feature type="chain" id="PRO_0000387476" description="18.9 kDa heat shock protein">
    <location>
        <begin position="1"/>
        <end position="177"/>
    </location>
</feature>
<feature type="domain" description="sHSP" evidence="1">
    <location>
        <begin position="63"/>
        <end position="177"/>
    </location>
</feature>
<feature type="region of interest" description="Disordered" evidence="2">
    <location>
        <begin position="1"/>
        <end position="35"/>
    </location>
</feature>
<feature type="compositionally biased region" description="Gly residues" evidence="2">
    <location>
        <begin position="17"/>
        <end position="32"/>
    </location>
</feature>
<protein>
    <recommendedName>
        <fullName>18.9 kDa heat shock protein</fullName>
        <shortName>OsHsp18.9</shortName>
    </recommendedName>
</protein>
<proteinExistence type="inferred from homology"/>
<organism>
    <name type="scientific">Oryza sativa subsp. japonica</name>
    <name type="common">Rice</name>
    <dbReference type="NCBI Taxonomy" id="39947"/>
    <lineage>
        <taxon>Eukaryota</taxon>
        <taxon>Viridiplantae</taxon>
        <taxon>Streptophyta</taxon>
        <taxon>Embryophyta</taxon>
        <taxon>Tracheophyta</taxon>
        <taxon>Spermatophyta</taxon>
        <taxon>Magnoliopsida</taxon>
        <taxon>Liliopsida</taxon>
        <taxon>Poales</taxon>
        <taxon>Poaceae</taxon>
        <taxon>BOP clade</taxon>
        <taxon>Oryzoideae</taxon>
        <taxon>Oryzeae</taxon>
        <taxon>Oryzinae</taxon>
        <taxon>Oryza</taxon>
        <taxon>Oryza sativa</taxon>
    </lineage>
</organism>
<reference key="1">
    <citation type="journal article" date="2005" name="Nature">
        <title>The map-based sequence of the rice genome.</title>
        <authorList>
            <consortium name="International rice genome sequencing project (IRGSP)"/>
        </authorList>
    </citation>
    <scope>NUCLEOTIDE SEQUENCE [LARGE SCALE GENOMIC DNA]</scope>
    <source>
        <strain>cv. Nipponbare</strain>
    </source>
</reference>
<reference key="2">
    <citation type="journal article" date="2008" name="Nucleic Acids Res.">
        <title>The rice annotation project database (RAP-DB): 2008 update.</title>
        <authorList>
            <consortium name="The rice annotation project (RAP)"/>
        </authorList>
    </citation>
    <scope>GENOME REANNOTATION</scope>
    <source>
        <strain>cv. Nipponbare</strain>
    </source>
</reference>
<reference key="3">
    <citation type="journal article" date="2013" name="Rice">
        <title>Improvement of the Oryza sativa Nipponbare reference genome using next generation sequence and optical map data.</title>
        <authorList>
            <person name="Kawahara Y."/>
            <person name="de la Bastide M."/>
            <person name="Hamilton J.P."/>
            <person name="Kanamori H."/>
            <person name="McCombie W.R."/>
            <person name="Ouyang S."/>
            <person name="Schwartz D.C."/>
            <person name="Tanaka T."/>
            <person name="Wu J."/>
            <person name="Zhou S."/>
            <person name="Childs K.L."/>
            <person name="Davidson R.M."/>
            <person name="Lin H."/>
            <person name="Quesada-Ocampo L."/>
            <person name="Vaillancourt B."/>
            <person name="Sakai H."/>
            <person name="Lee S.S."/>
            <person name="Kim J."/>
            <person name="Numa H."/>
            <person name="Itoh T."/>
            <person name="Buell C.R."/>
            <person name="Matsumoto T."/>
        </authorList>
    </citation>
    <scope>GENOME REANNOTATION</scope>
    <source>
        <strain>cv. Nipponbare</strain>
    </source>
</reference>
<reference key="4">
    <citation type="journal article" date="2005" name="PLoS Biol.">
        <title>The genomes of Oryza sativa: a history of duplications.</title>
        <authorList>
            <person name="Yu J."/>
            <person name="Wang J."/>
            <person name="Lin W."/>
            <person name="Li S."/>
            <person name="Li H."/>
            <person name="Zhou J."/>
            <person name="Ni P."/>
            <person name="Dong W."/>
            <person name="Hu S."/>
            <person name="Zeng C."/>
            <person name="Zhang J."/>
            <person name="Zhang Y."/>
            <person name="Li R."/>
            <person name="Xu Z."/>
            <person name="Li S."/>
            <person name="Li X."/>
            <person name="Zheng H."/>
            <person name="Cong L."/>
            <person name="Lin L."/>
            <person name="Yin J."/>
            <person name="Geng J."/>
            <person name="Li G."/>
            <person name="Shi J."/>
            <person name="Liu J."/>
            <person name="Lv H."/>
            <person name="Li J."/>
            <person name="Wang J."/>
            <person name="Deng Y."/>
            <person name="Ran L."/>
            <person name="Shi X."/>
            <person name="Wang X."/>
            <person name="Wu Q."/>
            <person name="Li C."/>
            <person name="Ren X."/>
            <person name="Wang J."/>
            <person name="Wang X."/>
            <person name="Li D."/>
            <person name="Liu D."/>
            <person name="Zhang X."/>
            <person name="Ji Z."/>
            <person name="Zhao W."/>
            <person name="Sun Y."/>
            <person name="Zhang Z."/>
            <person name="Bao J."/>
            <person name="Han Y."/>
            <person name="Dong L."/>
            <person name="Ji J."/>
            <person name="Chen P."/>
            <person name="Wu S."/>
            <person name="Liu J."/>
            <person name="Xiao Y."/>
            <person name="Bu D."/>
            <person name="Tan J."/>
            <person name="Yang L."/>
            <person name="Ye C."/>
            <person name="Zhang J."/>
            <person name="Xu J."/>
            <person name="Zhou Y."/>
            <person name="Yu Y."/>
            <person name="Zhang B."/>
            <person name="Zhuang S."/>
            <person name="Wei H."/>
            <person name="Liu B."/>
            <person name="Lei M."/>
            <person name="Yu H."/>
            <person name="Li Y."/>
            <person name="Xu H."/>
            <person name="Wei S."/>
            <person name="He X."/>
            <person name="Fang L."/>
            <person name="Zhang Z."/>
            <person name="Zhang Y."/>
            <person name="Huang X."/>
            <person name="Su Z."/>
            <person name="Tong W."/>
            <person name="Li J."/>
            <person name="Tong Z."/>
            <person name="Li S."/>
            <person name="Ye J."/>
            <person name="Wang L."/>
            <person name="Fang L."/>
            <person name="Lei T."/>
            <person name="Chen C.-S."/>
            <person name="Chen H.-C."/>
            <person name="Xu Z."/>
            <person name="Li H."/>
            <person name="Huang H."/>
            <person name="Zhang F."/>
            <person name="Xu H."/>
            <person name="Li N."/>
            <person name="Zhao C."/>
            <person name="Li S."/>
            <person name="Dong L."/>
            <person name="Huang Y."/>
            <person name="Li L."/>
            <person name="Xi Y."/>
            <person name="Qi Q."/>
            <person name="Li W."/>
            <person name="Zhang B."/>
            <person name="Hu W."/>
            <person name="Zhang Y."/>
            <person name="Tian X."/>
            <person name="Jiao Y."/>
            <person name="Liang X."/>
            <person name="Jin J."/>
            <person name="Gao L."/>
            <person name="Zheng W."/>
            <person name="Hao B."/>
            <person name="Liu S.-M."/>
            <person name="Wang W."/>
            <person name="Yuan L."/>
            <person name="Cao M."/>
            <person name="McDermott J."/>
            <person name="Samudrala R."/>
            <person name="Wang J."/>
            <person name="Wong G.K.-S."/>
            <person name="Yang H."/>
        </authorList>
    </citation>
    <scope>NUCLEOTIDE SEQUENCE [LARGE SCALE GENOMIC DNA]</scope>
    <source>
        <strain>cv. Nipponbare</strain>
    </source>
</reference>
<reference key="5">
    <citation type="journal article" date="2009" name="BMC Genomics">
        <title>Rice sHsp genes: genomic organization and expression profiling under stress and development.</title>
        <authorList>
            <person name="Sarkar N.K."/>
            <person name="Kim Y.-K."/>
            <person name="Grover A."/>
        </authorList>
    </citation>
    <scope>GENE FAMILY</scope>
</reference>
<keyword id="KW-0963">Cytoplasm</keyword>
<keyword id="KW-1185">Reference proteome</keyword>
<keyword id="KW-0346">Stress response</keyword>
<gene>
    <name type="primary">HSP18.9</name>
    <name type="ordered locus">Os02g0128000</name>
    <name type="ordered locus">LOC_Os02g03570</name>
    <name type="ORF">OsJ_05223</name>
    <name type="ORF">P0482F12.31</name>
    <name type="ORF">P0576F08.4</name>
</gene>